<dbReference type="EC" id="2.7.7.6" evidence="1"/>
<dbReference type="EMBL" id="CP000423">
    <property type="protein sequence ID" value="ABJ71252.1"/>
    <property type="molecule type" value="Genomic_DNA"/>
</dbReference>
<dbReference type="RefSeq" id="WP_003567588.1">
    <property type="nucleotide sequence ID" value="NC_008526.1"/>
</dbReference>
<dbReference type="RefSeq" id="YP_807694.1">
    <property type="nucleotide sequence ID" value="NC_008526.1"/>
</dbReference>
<dbReference type="SMR" id="Q034X0"/>
<dbReference type="STRING" id="321967.LSEI_2516"/>
<dbReference type="PaxDb" id="321967-LSEI_2516"/>
<dbReference type="KEGG" id="lca:LSEI_2516"/>
<dbReference type="PATRIC" id="fig|321967.11.peg.2470"/>
<dbReference type="HOGENOM" id="CLU_000524_4_1_9"/>
<dbReference type="Proteomes" id="UP000001651">
    <property type="component" value="Chromosome"/>
</dbReference>
<dbReference type="GO" id="GO:0000428">
    <property type="term" value="C:DNA-directed RNA polymerase complex"/>
    <property type="evidence" value="ECO:0007669"/>
    <property type="project" value="UniProtKB-KW"/>
</dbReference>
<dbReference type="GO" id="GO:0003677">
    <property type="term" value="F:DNA binding"/>
    <property type="evidence" value="ECO:0007669"/>
    <property type="project" value="UniProtKB-UniRule"/>
</dbReference>
<dbReference type="GO" id="GO:0003899">
    <property type="term" value="F:DNA-directed RNA polymerase activity"/>
    <property type="evidence" value="ECO:0007669"/>
    <property type="project" value="UniProtKB-UniRule"/>
</dbReference>
<dbReference type="GO" id="GO:0032549">
    <property type="term" value="F:ribonucleoside binding"/>
    <property type="evidence" value="ECO:0007669"/>
    <property type="project" value="InterPro"/>
</dbReference>
<dbReference type="GO" id="GO:0006351">
    <property type="term" value="P:DNA-templated transcription"/>
    <property type="evidence" value="ECO:0007669"/>
    <property type="project" value="UniProtKB-UniRule"/>
</dbReference>
<dbReference type="CDD" id="cd00653">
    <property type="entry name" value="RNA_pol_B_RPB2"/>
    <property type="match status" value="1"/>
</dbReference>
<dbReference type="FunFam" id="3.90.1800.10:FF:000001">
    <property type="entry name" value="DNA-directed RNA polymerase subunit beta"/>
    <property type="match status" value="1"/>
</dbReference>
<dbReference type="Gene3D" id="2.40.50.100">
    <property type="match status" value="1"/>
</dbReference>
<dbReference type="Gene3D" id="2.40.50.150">
    <property type="match status" value="1"/>
</dbReference>
<dbReference type="Gene3D" id="3.90.1100.10">
    <property type="match status" value="2"/>
</dbReference>
<dbReference type="Gene3D" id="2.30.150.10">
    <property type="entry name" value="DNA-directed RNA polymerase, beta subunit, external 1 domain"/>
    <property type="match status" value="1"/>
</dbReference>
<dbReference type="Gene3D" id="2.40.270.10">
    <property type="entry name" value="DNA-directed RNA polymerase, subunit 2, domain 6"/>
    <property type="match status" value="1"/>
</dbReference>
<dbReference type="Gene3D" id="3.90.1800.10">
    <property type="entry name" value="RNA polymerase alpha subunit dimerisation domain"/>
    <property type="match status" value="1"/>
</dbReference>
<dbReference type="Gene3D" id="3.90.1110.10">
    <property type="entry name" value="RNA polymerase Rpb2, domain 2"/>
    <property type="match status" value="1"/>
</dbReference>
<dbReference type="HAMAP" id="MF_01321">
    <property type="entry name" value="RNApol_bact_RpoB"/>
    <property type="match status" value="1"/>
</dbReference>
<dbReference type="InterPro" id="IPR042107">
    <property type="entry name" value="DNA-dir_RNA_pol_bsu_ext_1_sf"/>
</dbReference>
<dbReference type="InterPro" id="IPR019462">
    <property type="entry name" value="DNA-dir_RNA_pol_bsu_external_1"/>
</dbReference>
<dbReference type="InterPro" id="IPR015712">
    <property type="entry name" value="DNA-dir_RNA_pol_su2"/>
</dbReference>
<dbReference type="InterPro" id="IPR007120">
    <property type="entry name" value="DNA-dir_RNAP_su2_dom"/>
</dbReference>
<dbReference type="InterPro" id="IPR037033">
    <property type="entry name" value="DNA-dir_RNAP_su2_hyb_sf"/>
</dbReference>
<dbReference type="InterPro" id="IPR010243">
    <property type="entry name" value="RNA_pol_bsu_bac"/>
</dbReference>
<dbReference type="InterPro" id="IPR007121">
    <property type="entry name" value="RNA_pol_bsu_CS"/>
</dbReference>
<dbReference type="InterPro" id="IPR007644">
    <property type="entry name" value="RNA_pol_bsu_protrusion"/>
</dbReference>
<dbReference type="InterPro" id="IPR007642">
    <property type="entry name" value="RNA_pol_Rpb2_2"/>
</dbReference>
<dbReference type="InterPro" id="IPR037034">
    <property type="entry name" value="RNA_pol_Rpb2_2_sf"/>
</dbReference>
<dbReference type="InterPro" id="IPR007645">
    <property type="entry name" value="RNA_pol_Rpb2_3"/>
</dbReference>
<dbReference type="InterPro" id="IPR007641">
    <property type="entry name" value="RNA_pol_Rpb2_7"/>
</dbReference>
<dbReference type="InterPro" id="IPR014724">
    <property type="entry name" value="RNA_pol_RPB2_OB-fold"/>
</dbReference>
<dbReference type="NCBIfam" id="NF001616">
    <property type="entry name" value="PRK00405.1"/>
    <property type="match status" value="1"/>
</dbReference>
<dbReference type="NCBIfam" id="TIGR02013">
    <property type="entry name" value="rpoB"/>
    <property type="match status" value="1"/>
</dbReference>
<dbReference type="PANTHER" id="PTHR20856">
    <property type="entry name" value="DNA-DIRECTED RNA POLYMERASE I SUBUNIT 2"/>
    <property type="match status" value="1"/>
</dbReference>
<dbReference type="Pfam" id="PF04563">
    <property type="entry name" value="RNA_pol_Rpb2_1"/>
    <property type="match status" value="1"/>
</dbReference>
<dbReference type="Pfam" id="PF04561">
    <property type="entry name" value="RNA_pol_Rpb2_2"/>
    <property type="match status" value="2"/>
</dbReference>
<dbReference type="Pfam" id="PF04565">
    <property type="entry name" value="RNA_pol_Rpb2_3"/>
    <property type="match status" value="1"/>
</dbReference>
<dbReference type="Pfam" id="PF10385">
    <property type="entry name" value="RNA_pol_Rpb2_45"/>
    <property type="match status" value="1"/>
</dbReference>
<dbReference type="Pfam" id="PF00562">
    <property type="entry name" value="RNA_pol_Rpb2_6"/>
    <property type="match status" value="1"/>
</dbReference>
<dbReference type="Pfam" id="PF04560">
    <property type="entry name" value="RNA_pol_Rpb2_7"/>
    <property type="match status" value="1"/>
</dbReference>
<dbReference type="SUPFAM" id="SSF64484">
    <property type="entry name" value="beta and beta-prime subunits of DNA dependent RNA-polymerase"/>
    <property type="match status" value="1"/>
</dbReference>
<dbReference type="PROSITE" id="PS01166">
    <property type="entry name" value="RNA_POL_BETA"/>
    <property type="match status" value="1"/>
</dbReference>
<sequence length="1199" mass="133701">MAGHLVNYGKHRTRRSYARIKEVLDLPNLIEIQTNSYQWFLDEGLKEMFDDIMPIDDFQGKLSLEFVGYQLLEPKYTVEEARQHDANYSAPLHVTLRLTNHETGEIKSQDVFFGDFPLMTKQGTFIINGAERVIVSQLVRSPGVYFHSETDKNSRVTYGTTVIPNRGAWLEYETDAKDIAYVRIDRTRKIPLTELVRALGFGSDQDIINMFGDNDSLMLTLEKDVHKNTDDSRTDEALKDIYERLRPGEPKTADSSRSLLYARFFDPKRYDLASVGRYKVNKKLSLKTRLLNQVLAETLADPDTGEVIAQKGTKVDRQVMDKLAPYLDRDDFKTITYQPSDQGVVTDPIELQSIKVYSQVTPDKEINLIGNGHIGKKVKHIVPADVLASMNYFLNLQEGLGSIDDIDHLGNRRIRSVGELLQNQFRIGLSRMERVVRERMSIQDTATVTPQQLINIRPVVASIKEFFGSSQLSQFMDQTNPLGELTHKRRLSALGPGGLTRDRAGYEVRDVHYTHYGRMCPIETPEGPNIGLINSLASYAVVNPYGFIETPYRRVSWDTHKVTDKIDYLTADEEDNYIVAQANSPLNDDGSFVDETVLARHKDNNIEISPDKVDYMDVSPKQVVAVATACIPFLENDDSNRALMGANMQRQAVPLVNPHAPLVGTGMEYKAAHDSGTAVLANNAGTVEYVDAKQIRVRREDGALDAYNLMKFKRSNAGKNYNQRPIVTIGDHVDVDEIIADGPAMQNGELALGQNPIIAFMTWNMYNYEDAIVLSERLVKDDVYTSIHIEEYESEARDTKLGPEEVTREIPNVGEEALKDLDEFGVVRVGAEVRDGDILVGKVTPKGVTELSAEERLLHAIFGEKAREVRDTSLRVPHGGGGIIQDVKIFTREAGDELSPGVNMMVRVYITQKRKIQVGDKMAGRHGNKGTVSVVVPEEDMPYLPDGTPVDICLSPMGVPSRMNIGQVLELHLGMAARNLGIHVATPVFDGANDKDLWATVKEAGMASDGKSVLYDGRTGEPFENRVSVGIMYYMKLSHMVDDKIHARSIGPYSLVTQQPLGGKAQFGGQRFGEMEVWALEAYGAAYTLQEILTYKSDDVVGRVKTYEAIVKGEPIPKPGVPESFRVLVKELQALGLDMKVLGADKKEIELRDMDDDEDDIVSVDALAKFAAQQEEKKAHEAAAQATDGKSANSTDDKK</sequence>
<evidence type="ECO:0000255" key="1">
    <source>
        <dbReference type="HAMAP-Rule" id="MF_01321"/>
    </source>
</evidence>
<evidence type="ECO:0000256" key="2">
    <source>
        <dbReference type="SAM" id="MobiDB-lite"/>
    </source>
</evidence>
<reference key="1">
    <citation type="journal article" date="2006" name="Proc. Natl. Acad. Sci. U.S.A.">
        <title>Comparative genomics of the lactic acid bacteria.</title>
        <authorList>
            <person name="Makarova K.S."/>
            <person name="Slesarev A."/>
            <person name="Wolf Y.I."/>
            <person name="Sorokin A."/>
            <person name="Mirkin B."/>
            <person name="Koonin E.V."/>
            <person name="Pavlov A."/>
            <person name="Pavlova N."/>
            <person name="Karamychev V."/>
            <person name="Polouchine N."/>
            <person name="Shakhova V."/>
            <person name="Grigoriev I."/>
            <person name="Lou Y."/>
            <person name="Rohksar D."/>
            <person name="Lucas S."/>
            <person name="Huang K."/>
            <person name="Goodstein D.M."/>
            <person name="Hawkins T."/>
            <person name="Plengvidhya V."/>
            <person name="Welker D."/>
            <person name="Hughes J."/>
            <person name="Goh Y."/>
            <person name="Benson A."/>
            <person name="Baldwin K."/>
            <person name="Lee J.-H."/>
            <person name="Diaz-Muniz I."/>
            <person name="Dosti B."/>
            <person name="Smeianov V."/>
            <person name="Wechter W."/>
            <person name="Barabote R."/>
            <person name="Lorca G."/>
            <person name="Altermann E."/>
            <person name="Barrangou R."/>
            <person name="Ganesan B."/>
            <person name="Xie Y."/>
            <person name="Rawsthorne H."/>
            <person name="Tamir D."/>
            <person name="Parker C."/>
            <person name="Breidt F."/>
            <person name="Broadbent J.R."/>
            <person name="Hutkins R."/>
            <person name="O'Sullivan D."/>
            <person name="Steele J."/>
            <person name="Unlu G."/>
            <person name="Saier M.H. Jr."/>
            <person name="Klaenhammer T."/>
            <person name="Richardson P."/>
            <person name="Kozyavkin S."/>
            <person name="Weimer B.C."/>
            <person name="Mills D.A."/>
        </authorList>
    </citation>
    <scope>NUCLEOTIDE SEQUENCE [LARGE SCALE GENOMIC DNA]</scope>
    <source>
        <strain>ATCC 334 / BCRC 17002 / CCUG 31169 / CIP 107868 / KCTC 3260 / NRRL B-441</strain>
    </source>
</reference>
<name>RPOB_LACP3</name>
<accession>Q034X0</accession>
<comment type="function">
    <text evidence="1">DNA-dependent RNA polymerase catalyzes the transcription of DNA into RNA using the four ribonucleoside triphosphates as substrates.</text>
</comment>
<comment type="catalytic activity">
    <reaction evidence="1">
        <text>RNA(n) + a ribonucleoside 5'-triphosphate = RNA(n+1) + diphosphate</text>
        <dbReference type="Rhea" id="RHEA:21248"/>
        <dbReference type="Rhea" id="RHEA-COMP:14527"/>
        <dbReference type="Rhea" id="RHEA-COMP:17342"/>
        <dbReference type="ChEBI" id="CHEBI:33019"/>
        <dbReference type="ChEBI" id="CHEBI:61557"/>
        <dbReference type="ChEBI" id="CHEBI:140395"/>
        <dbReference type="EC" id="2.7.7.6"/>
    </reaction>
</comment>
<comment type="subunit">
    <text evidence="1">The RNAP catalytic core consists of 2 alpha, 1 beta, 1 beta' and 1 omega subunit. When a sigma factor is associated with the core the holoenzyme is formed, which can initiate transcription.</text>
</comment>
<comment type="similarity">
    <text evidence="1">Belongs to the RNA polymerase beta chain family.</text>
</comment>
<feature type="chain" id="PRO_0000300330" description="DNA-directed RNA polymerase subunit beta">
    <location>
        <begin position="1"/>
        <end position="1199"/>
    </location>
</feature>
<feature type="region of interest" description="Disordered" evidence="2">
    <location>
        <begin position="1175"/>
        <end position="1199"/>
    </location>
</feature>
<feature type="compositionally biased region" description="Polar residues" evidence="2">
    <location>
        <begin position="1188"/>
        <end position="1199"/>
    </location>
</feature>
<gene>
    <name evidence="1" type="primary">rpoB</name>
    <name type="ordered locus">LSEI_2516</name>
</gene>
<protein>
    <recommendedName>
        <fullName evidence="1">DNA-directed RNA polymerase subunit beta</fullName>
        <shortName evidence="1">RNAP subunit beta</shortName>
        <ecNumber evidence="1">2.7.7.6</ecNumber>
    </recommendedName>
    <alternativeName>
        <fullName evidence="1">RNA polymerase subunit beta</fullName>
    </alternativeName>
    <alternativeName>
        <fullName evidence="1">Transcriptase subunit beta</fullName>
    </alternativeName>
</protein>
<organism>
    <name type="scientific">Lacticaseibacillus paracasei (strain ATCC 334 / BCRC 17002 / CCUG 31169 / CIP 107868 / KCTC 3260 / NRRL B-441)</name>
    <name type="common">Lactobacillus paracasei</name>
    <dbReference type="NCBI Taxonomy" id="321967"/>
    <lineage>
        <taxon>Bacteria</taxon>
        <taxon>Bacillati</taxon>
        <taxon>Bacillota</taxon>
        <taxon>Bacilli</taxon>
        <taxon>Lactobacillales</taxon>
        <taxon>Lactobacillaceae</taxon>
        <taxon>Lacticaseibacillus</taxon>
    </lineage>
</organism>
<keyword id="KW-0240">DNA-directed RNA polymerase</keyword>
<keyword id="KW-0548">Nucleotidyltransferase</keyword>
<keyword id="KW-1185">Reference proteome</keyword>
<keyword id="KW-0804">Transcription</keyword>
<keyword id="KW-0808">Transferase</keyword>
<proteinExistence type="inferred from homology"/>